<accession>Q1RGL3</accession>
<reference key="1">
    <citation type="journal article" date="2006" name="PLoS Genet.">
        <title>Genome sequence of Rickettsia bellii illuminates the role of amoebae in gene exchanges between intracellular pathogens.</title>
        <authorList>
            <person name="Ogata H."/>
            <person name="La Scola B."/>
            <person name="Audic S."/>
            <person name="Renesto P."/>
            <person name="Blanc G."/>
            <person name="Robert C."/>
            <person name="Fournier P.-E."/>
            <person name="Claverie J.-M."/>
            <person name="Raoult D."/>
        </authorList>
    </citation>
    <scope>NUCLEOTIDE SEQUENCE [LARGE SCALE GENOMIC DNA]</scope>
    <source>
        <strain>RML369-C</strain>
    </source>
</reference>
<comment type="function">
    <text evidence="1">Catalyzes the hydrolysis of N-succinyl-L,L-diaminopimelic acid (SDAP), forming succinate and LL-2,6-diaminopimelate (DAP), an intermediate involved in the bacterial biosynthesis of lysine and meso-diaminopimelic acid, an essential component of bacterial cell walls.</text>
</comment>
<comment type="catalytic activity">
    <reaction evidence="1">
        <text>N-succinyl-(2S,6S)-2,6-diaminopimelate + H2O = (2S,6S)-2,6-diaminopimelate + succinate</text>
        <dbReference type="Rhea" id="RHEA:22608"/>
        <dbReference type="ChEBI" id="CHEBI:15377"/>
        <dbReference type="ChEBI" id="CHEBI:30031"/>
        <dbReference type="ChEBI" id="CHEBI:57609"/>
        <dbReference type="ChEBI" id="CHEBI:58087"/>
        <dbReference type="EC" id="3.5.1.18"/>
    </reaction>
</comment>
<comment type="cofactor">
    <cofactor evidence="1">
        <name>Zn(2+)</name>
        <dbReference type="ChEBI" id="CHEBI:29105"/>
    </cofactor>
    <cofactor evidence="1">
        <name>Co(2+)</name>
        <dbReference type="ChEBI" id="CHEBI:48828"/>
    </cofactor>
    <text evidence="1">Binds 2 Zn(2+) or Co(2+) ions per subunit.</text>
</comment>
<comment type="pathway">
    <text evidence="1">Amino-acid biosynthesis; L-lysine biosynthesis via DAP pathway; LL-2,6-diaminopimelate from (S)-tetrahydrodipicolinate (succinylase route): step 3/3.</text>
</comment>
<comment type="subunit">
    <text evidence="1">Homodimer.</text>
</comment>
<comment type="similarity">
    <text evidence="1">Belongs to the peptidase M20A family. DapE subfamily.</text>
</comment>
<name>DAPE_RICBR</name>
<keyword id="KW-0028">Amino-acid biosynthesis</keyword>
<keyword id="KW-0170">Cobalt</keyword>
<keyword id="KW-0220">Diaminopimelate biosynthesis</keyword>
<keyword id="KW-0378">Hydrolase</keyword>
<keyword id="KW-0457">Lysine biosynthesis</keyword>
<keyword id="KW-0479">Metal-binding</keyword>
<keyword id="KW-0862">Zinc</keyword>
<evidence type="ECO:0000255" key="1">
    <source>
        <dbReference type="HAMAP-Rule" id="MF_01690"/>
    </source>
</evidence>
<proteinExistence type="inferred from homology"/>
<sequence>MHTTYLKNLIGFESLTPQSNGAIEYIDDLLKEHGFKTEVKIFGETEQVTNLYAVYGNSKPNICFVGHVDVVPAGDPNLWHNSNPFKAHEQEGKIYGRGTVDMKGSIACFLAASLDFIKNNTDFVGSISFLLTSDEEGKAKHGTKEMLQYIYNQGHEIDFAIVGEPTCEKEIGDTIKIGRRGSINFKLAVKGLGGHVAYPQKANNPLPCLIRILNELTNIKLDKGTEFFQNSNLEVTNIDVDNNTTNVIPETATVHFNIRFNNLHSAETLAKQVEEIIKQHCQKHKLDYTLEYNSSADSFIQNPNDKIKEFATIVEKTLNIKPKFSTSGGTSDARFVKNYCPLVEFGLLSDTAHKINEYTKISDLQKLYDVYYNFLMETLNVTGSPPLLGMT</sequence>
<feature type="chain" id="PRO_0000375699" description="Succinyl-diaminopimelate desuccinylase">
    <location>
        <begin position="1"/>
        <end position="391"/>
    </location>
</feature>
<feature type="active site" evidence="1">
    <location>
        <position position="69"/>
    </location>
</feature>
<feature type="active site" description="Proton acceptor" evidence="1">
    <location>
        <position position="135"/>
    </location>
</feature>
<feature type="binding site" evidence="1">
    <location>
        <position position="67"/>
    </location>
    <ligand>
        <name>Zn(2+)</name>
        <dbReference type="ChEBI" id="CHEBI:29105"/>
        <label>1</label>
    </ligand>
</feature>
<feature type="binding site" evidence="1">
    <location>
        <position position="101"/>
    </location>
    <ligand>
        <name>Zn(2+)</name>
        <dbReference type="ChEBI" id="CHEBI:29105"/>
        <label>1</label>
    </ligand>
</feature>
<feature type="binding site" evidence="1">
    <location>
        <position position="101"/>
    </location>
    <ligand>
        <name>Zn(2+)</name>
        <dbReference type="ChEBI" id="CHEBI:29105"/>
        <label>2</label>
    </ligand>
</feature>
<feature type="binding site" evidence="1">
    <location>
        <position position="136"/>
    </location>
    <ligand>
        <name>Zn(2+)</name>
        <dbReference type="ChEBI" id="CHEBI:29105"/>
        <label>2</label>
    </ligand>
</feature>
<feature type="binding site" evidence="1">
    <location>
        <position position="164"/>
    </location>
    <ligand>
        <name>Zn(2+)</name>
        <dbReference type="ChEBI" id="CHEBI:29105"/>
        <label>1</label>
    </ligand>
</feature>
<feature type="binding site" evidence="1">
    <location>
        <position position="353"/>
    </location>
    <ligand>
        <name>Zn(2+)</name>
        <dbReference type="ChEBI" id="CHEBI:29105"/>
        <label>2</label>
    </ligand>
</feature>
<gene>
    <name evidence="1" type="primary">dapE</name>
    <name type="ordered locus">RBE_1420</name>
</gene>
<protein>
    <recommendedName>
        <fullName evidence="1">Succinyl-diaminopimelate desuccinylase</fullName>
        <shortName evidence="1">SDAP desuccinylase</shortName>
        <ecNumber evidence="1">3.5.1.18</ecNumber>
    </recommendedName>
    <alternativeName>
        <fullName evidence="1">N-succinyl-LL-2,6-diaminoheptanedioate amidohydrolase</fullName>
    </alternativeName>
</protein>
<organism>
    <name type="scientific">Rickettsia bellii (strain RML369-C)</name>
    <dbReference type="NCBI Taxonomy" id="336407"/>
    <lineage>
        <taxon>Bacteria</taxon>
        <taxon>Pseudomonadati</taxon>
        <taxon>Pseudomonadota</taxon>
        <taxon>Alphaproteobacteria</taxon>
        <taxon>Rickettsiales</taxon>
        <taxon>Rickettsiaceae</taxon>
        <taxon>Rickettsieae</taxon>
        <taxon>Rickettsia</taxon>
        <taxon>belli group</taxon>
    </lineage>
</organism>
<dbReference type="EC" id="3.5.1.18" evidence="1"/>
<dbReference type="EMBL" id="CP000087">
    <property type="protein sequence ID" value="ABE05501.1"/>
    <property type="molecule type" value="Genomic_DNA"/>
</dbReference>
<dbReference type="RefSeq" id="WP_011478070.1">
    <property type="nucleotide sequence ID" value="NC_007940.1"/>
</dbReference>
<dbReference type="SMR" id="Q1RGL3"/>
<dbReference type="KEGG" id="rbe:RBE_1420"/>
<dbReference type="eggNOG" id="COG0624">
    <property type="taxonomic scope" value="Bacteria"/>
</dbReference>
<dbReference type="HOGENOM" id="CLU_021802_4_0_5"/>
<dbReference type="OrthoDB" id="9809784at2"/>
<dbReference type="UniPathway" id="UPA00034">
    <property type="reaction ID" value="UER00021"/>
</dbReference>
<dbReference type="Proteomes" id="UP000001951">
    <property type="component" value="Chromosome"/>
</dbReference>
<dbReference type="GO" id="GO:0008777">
    <property type="term" value="F:acetylornithine deacetylase activity"/>
    <property type="evidence" value="ECO:0007669"/>
    <property type="project" value="TreeGrafter"/>
</dbReference>
<dbReference type="GO" id="GO:0050897">
    <property type="term" value="F:cobalt ion binding"/>
    <property type="evidence" value="ECO:0007669"/>
    <property type="project" value="UniProtKB-UniRule"/>
</dbReference>
<dbReference type="GO" id="GO:0009014">
    <property type="term" value="F:succinyl-diaminopimelate desuccinylase activity"/>
    <property type="evidence" value="ECO:0007669"/>
    <property type="project" value="UniProtKB-UniRule"/>
</dbReference>
<dbReference type="GO" id="GO:0008270">
    <property type="term" value="F:zinc ion binding"/>
    <property type="evidence" value="ECO:0007669"/>
    <property type="project" value="UniProtKB-UniRule"/>
</dbReference>
<dbReference type="GO" id="GO:0019877">
    <property type="term" value="P:diaminopimelate biosynthetic process"/>
    <property type="evidence" value="ECO:0007669"/>
    <property type="project" value="UniProtKB-UniRule"/>
</dbReference>
<dbReference type="GO" id="GO:0006526">
    <property type="term" value="P:L-arginine biosynthetic process"/>
    <property type="evidence" value="ECO:0007669"/>
    <property type="project" value="TreeGrafter"/>
</dbReference>
<dbReference type="GO" id="GO:0009089">
    <property type="term" value="P:lysine biosynthetic process via diaminopimelate"/>
    <property type="evidence" value="ECO:0007669"/>
    <property type="project" value="UniProtKB-UniRule"/>
</dbReference>
<dbReference type="CDD" id="cd03891">
    <property type="entry name" value="M20_DapE_proteobac"/>
    <property type="match status" value="1"/>
</dbReference>
<dbReference type="Gene3D" id="3.30.70.360">
    <property type="match status" value="1"/>
</dbReference>
<dbReference type="Gene3D" id="3.40.630.10">
    <property type="entry name" value="Zn peptidases"/>
    <property type="match status" value="2"/>
</dbReference>
<dbReference type="HAMAP" id="MF_01690">
    <property type="entry name" value="DapE"/>
    <property type="match status" value="1"/>
</dbReference>
<dbReference type="InterPro" id="IPR001261">
    <property type="entry name" value="ArgE/DapE_CS"/>
</dbReference>
<dbReference type="InterPro" id="IPR036264">
    <property type="entry name" value="Bact_exopeptidase_dim_dom"/>
</dbReference>
<dbReference type="InterPro" id="IPR005941">
    <property type="entry name" value="DapE_proteobac"/>
</dbReference>
<dbReference type="InterPro" id="IPR002933">
    <property type="entry name" value="Peptidase_M20"/>
</dbReference>
<dbReference type="InterPro" id="IPR011650">
    <property type="entry name" value="Peptidase_M20_dimer"/>
</dbReference>
<dbReference type="InterPro" id="IPR050072">
    <property type="entry name" value="Peptidase_M20A"/>
</dbReference>
<dbReference type="NCBIfam" id="TIGR01246">
    <property type="entry name" value="dapE_proteo"/>
    <property type="match status" value="1"/>
</dbReference>
<dbReference type="NCBIfam" id="NF009557">
    <property type="entry name" value="PRK13009.1"/>
    <property type="match status" value="1"/>
</dbReference>
<dbReference type="PANTHER" id="PTHR43808">
    <property type="entry name" value="ACETYLORNITHINE DEACETYLASE"/>
    <property type="match status" value="1"/>
</dbReference>
<dbReference type="PANTHER" id="PTHR43808:SF31">
    <property type="entry name" value="N-ACETYL-L-CITRULLINE DEACETYLASE"/>
    <property type="match status" value="1"/>
</dbReference>
<dbReference type="Pfam" id="PF07687">
    <property type="entry name" value="M20_dimer"/>
    <property type="match status" value="1"/>
</dbReference>
<dbReference type="Pfam" id="PF01546">
    <property type="entry name" value="Peptidase_M20"/>
    <property type="match status" value="1"/>
</dbReference>
<dbReference type="SUPFAM" id="SSF55031">
    <property type="entry name" value="Bacterial exopeptidase dimerisation domain"/>
    <property type="match status" value="1"/>
</dbReference>
<dbReference type="SUPFAM" id="SSF53187">
    <property type="entry name" value="Zn-dependent exopeptidases"/>
    <property type="match status" value="1"/>
</dbReference>
<dbReference type="PROSITE" id="PS00759">
    <property type="entry name" value="ARGE_DAPE_CPG2_2"/>
    <property type="match status" value="1"/>
</dbReference>